<feature type="chain" id="PRO_0000056264" description="Tripartite motif-containing protein 42">
    <location>
        <begin position="1"/>
        <end position="723"/>
    </location>
</feature>
<feature type="domain" description="COS" evidence="5">
    <location>
        <begin position="434"/>
        <end position="492"/>
    </location>
</feature>
<feature type="domain" description="Fibronectin type-III" evidence="4">
    <location>
        <begin position="603"/>
        <end position="701"/>
    </location>
</feature>
<feature type="zinc finger region" description="RING-type" evidence="3">
    <location>
        <begin position="146"/>
        <end position="192"/>
    </location>
</feature>
<feature type="zinc finger region" description="B box-type 1" evidence="2">
    <location>
        <begin position="235"/>
        <end position="280"/>
    </location>
</feature>
<feature type="zinc finger region" description="B box-type 2" evidence="2">
    <location>
        <begin position="285"/>
        <end position="326"/>
    </location>
</feature>
<feature type="coiled-coil region" evidence="1">
    <location>
        <begin position="382"/>
        <end position="412"/>
    </location>
</feature>
<feature type="binding site" evidence="2">
    <location>
        <position position="290"/>
    </location>
    <ligand>
        <name>Zn(2+)</name>
        <dbReference type="ChEBI" id="CHEBI:29105"/>
    </ligand>
</feature>
<feature type="binding site" evidence="2">
    <location>
        <position position="293"/>
    </location>
    <ligand>
        <name>Zn(2+)</name>
        <dbReference type="ChEBI" id="CHEBI:29105"/>
    </ligand>
</feature>
<feature type="binding site" evidence="2">
    <location>
        <position position="313"/>
    </location>
    <ligand>
        <name>Zn(2+)</name>
        <dbReference type="ChEBI" id="CHEBI:29105"/>
    </ligand>
</feature>
<feature type="binding site" evidence="2">
    <location>
        <position position="318"/>
    </location>
    <ligand>
        <name>Zn(2+)</name>
        <dbReference type="ChEBI" id="CHEBI:29105"/>
    </ligand>
</feature>
<feature type="sequence conflict" description="In Ref. 1; BAB31824." evidence="6" ref="1">
    <original>V</original>
    <variation>I</variation>
    <location>
        <position position="679"/>
    </location>
</feature>
<keyword id="KW-0175">Coiled coil</keyword>
<keyword id="KW-0479">Metal-binding</keyword>
<keyword id="KW-1185">Reference proteome</keyword>
<keyword id="KW-0677">Repeat</keyword>
<keyword id="KW-0862">Zinc</keyword>
<keyword id="KW-0863">Zinc-finger</keyword>
<name>TRI42_MOUSE</name>
<organism>
    <name type="scientific">Mus musculus</name>
    <name type="common">Mouse</name>
    <dbReference type="NCBI Taxonomy" id="10090"/>
    <lineage>
        <taxon>Eukaryota</taxon>
        <taxon>Metazoa</taxon>
        <taxon>Chordata</taxon>
        <taxon>Craniata</taxon>
        <taxon>Vertebrata</taxon>
        <taxon>Euteleostomi</taxon>
        <taxon>Mammalia</taxon>
        <taxon>Eutheria</taxon>
        <taxon>Euarchontoglires</taxon>
        <taxon>Glires</taxon>
        <taxon>Rodentia</taxon>
        <taxon>Myomorpha</taxon>
        <taxon>Muroidea</taxon>
        <taxon>Muridae</taxon>
        <taxon>Murinae</taxon>
        <taxon>Mus</taxon>
        <taxon>Mus</taxon>
    </lineage>
</organism>
<evidence type="ECO:0000255" key="1"/>
<evidence type="ECO:0000255" key="2">
    <source>
        <dbReference type="PROSITE-ProRule" id="PRU00024"/>
    </source>
</evidence>
<evidence type="ECO:0000255" key="3">
    <source>
        <dbReference type="PROSITE-ProRule" id="PRU00175"/>
    </source>
</evidence>
<evidence type="ECO:0000255" key="4">
    <source>
        <dbReference type="PROSITE-ProRule" id="PRU00316"/>
    </source>
</evidence>
<evidence type="ECO:0000255" key="5">
    <source>
        <dbReference type="PROSITE-ProRule" id="PRU00586"/>
    </source>
</evidence>
<evidence type="ECO:0000305" key="6"/>
<accession>Q9D2H5</accession>
<accession>E9QN55</accession>
<comment type="similarity">
    <text evidence="6">Belongs to the TRIM/RBCC family.</text>
</comment>
<proteinExistence type="evidence at transcript level"/>
<protein>
    <recommendedName>
        <fullName>Tripartite motif-containing protein 42</fullName>
    </recommendedName>
</protein>
<dbReference type="EMBL" id="AK019654">
    <property type="protein sequence ID" value="BAB31824.1"/>
    <property type="molecule type" value="mRNA"/>
</dbReference>
<dbReference type="EMBL" id="AC126931">
    <property type="status" value="NOT_ANNOTATED_CDS"/>
    <property type="molecule type" value="Genomic_DNA"/>
</dbReference>
<dbReference type="CCDS" id="CCDS23422.1"/>
<dbReference type="RefSeq" id="NP_084495.2">
    <property type="nucleotide sequence ID" value="NM_030219.2"/>
</dbReference>
<dbReference type="SMR" id="Q9D2H5"/>
<dbReference type="BioGRID" id="219699">
    <property type="interactions" value="4"/>
</dbReference>
<dbReference type="FunCoup" id="Q9D2H5">
    <property type="interactions" value="65"/>
</dbReference>
<dbReference type="STRING" id="10090.ENSMUSP00000035026"/>
<dbReference type="iPTMnet" id="Q9D2H5"/>
<dbReference type="PhosphoSitePlus" id="Q9D2H5"/>
<dbReference type="SwissPalm" id="Q9D2H5"/>
<dbReference type="PaxDb" id="10090-ENSMUSP00000035026"/>
<dbReference type="ProteomicsDB" id="258977"/>
<dbReference type="Antibodypedia" id="1220">
    <property type="antibodies" value="82 antibodies from 15 providers"/>
</dbReference>
<dbReference type="DNASU" id="78911"/>
<dbReference type="Ensembl" id="ENSMUST00000035026.5">
    <property type="protein sequence ID" value="ENSMUSP00000035026.5"/>
    <property type="gene ID" value="ENSMUSG00000032451.7"/>
</dbReference>
<dbReference type="GeneID" id="78911"/>
<dbReference type="KEGG" id="mmu:78911"/>
<dbReference type="UCSC" id="uc009rdc.1">
    <property type="organism name" value="mouse"/>
</dbReference>
<dbReference type="AGR" id="MGI:1926161"/>
<dbReference type="CTD" id="287015"/>
<dbReference type="MGI" id="MGI:1926161">
    <property type="gene designation" value="Trim42"/>
</dbReference>
<dbReference type="VEuPathDB" id="HostDB:ENSMUSG00000032451"/>
<dbReference type="eggNOG" id="KOG2177">
    <property type="taxonomic scope" value="Eukaryota"/>
</dbReference>
<dbReference type="GeneTree" id="ENSGT00530000064220"/>
<dbReference type="HOGENOM" id="CLU_023245_0_0_1"/>
<dbReference type="InParanoid" id="Q9D2H5"/>
<dbReference type="OMA" id="FGNQQIY"/>
<dbReference type="OrthoDB" id="5800423at2759"/>
<dbReference type="PhylomeDB" id="Q9D2H5"/>
<dbReference type="TreeFam" id="TF336556"/>
<dbReference type="BioGRID-ORCS" id="78911">
    <property type="hits" value="0 hits in 76 CRISPR screens"/>
</dbReference>
<dbReference type="PRO" id="PR:Q9D2H5"/>
<dbReference type="Proteomes" id="UP000000589">
    <property type="component" value="Chromosome 9"/>
</dbReference>
<dbReference type="RNAct" id="Q9D2H5">
    <property type="molecule type" value="protein"/>
</dbReference>
<dbReference type="Bgee" id="ENSMUSG00000032451">
    <property type="expression patterns" value="Expressed in seminiferous tubule of testis and 13 other cell types or tissues"/>
</dbReference>
<dbReference type="GO" id="GO:0008270">
    <property type="term" value="F:zinc ion binding"/>
    <property type="evidence" value="ECO:0007669"/>
    <property type="project" value="UniProtKB-KW"/>
</dbReference>
<dbReference type="CDD" id="cd00063">
    <property type="entry name" value="FN3"/>
    <property type="match status" value="1"/>
</dbReference>
<dbReference type="CDD" id="cd16578">
    <property type="entry name" value="RING-HC_TRIM42_C-III"/>
    <property type="match status" value="1"/>
</dbReference>
<dbReference type="Gene3D" id="4.10.830.40">
    <property type="match status" value="1"/>
</dbReference>
<dbReference type="Gene3D" id="3.30.160.60">
    <property type="entry name" value="Classic Zinc Finger"/>
    <property type="match status" value="1"/>
</dbReference>
<dbReference type="Gene3D" id="2.60.40.10">
    <property type="entry name" value="Immunoglobulins"/>
    <property type="match status" value="1"/>
</dbReference>
<dbReference type="InterPro" id="IPR017903">
    <property type="entry name" value="COS_domain"/>
</dbReference>
<dbReference type="InterPro" id="IPR003961">
    <property type="entry name" value="FN3_dom"/>
</dbReference>
<dbReference type="InterPro" id="IPR036116">
    <property type="entry name" value="FN3_sf"/>
</dbReference>
<dbReference type="InterPro" id="IPR013783">
    <property type="entry name" value="Ig-like_fold"/>
</dbReference>
<dbReference type="InterPro" id="IPR042765">
    <property type="entry name" value="TRIM42_RING-HC"/>
</dbReference>
<dbReference type="InterPro" id="IPR047153">
    <property type="entry name" value="TRIM45/56/19-like"/>
</dbReference>
<dbReference type="InterPro" id="IPR000315">
    <property type="entry name" value="Znf_B-box"/>
</dbReference>
<dbReference type="InterPro" id="IPR001841">
    <property type="entry name" value="Znf_RING"/>
</dbReference>
<dbReference type="InterPro" id="IPR017907">
    <property type="entry name" value="Znf_RING_CS"/>
</dbReference>
<dbReference type="PANTHER" id="PTHR25462">
    <property type="entry name" value="BONUS, ISOFORM C-RELATED"/>
    <property type="match status" value="1"/>
</dbReference>
<dbReference type="PANTHER" id="PTHR25462:SF299">
    <property type="entry name" value="E3 UBIQUITIN-PROTEIN LIGASE TRIM56"/>
    <property type="match status" value="1"/>
</dbReference>
<dbReference type="Pfam" id="PF00041">
    <property type="entry name" value="fn3"/>
    <property type="match status" value="1"/>
</dbReference>
<dbReference type="Pfam" id="PF00643">
    <property type="entry name" value="zf-B_box"/>
    <property type="match status" value="1"/>
</dbReference>
<dbReference type="SMART" id="SM00336">
    <property type="entry name" value="BBOX"/>
    <property type="match status" value="2"/>
</dbReference>
<dbReference type="SMART" id="SM00060">
    <property type="entry name" value="FN3"/>
    <property type="match status" value="1"/>
</dbReference>
<dbReference type="SMART" id="SM00184">
    <property type="entry name" value="RING"/>
    <property type="match status" value="1"/>
</dbReference>
<dbReference type="SUPFAM" id="SSF57845">
    <property type="entry name" value="B-box zinc-binding domain"/>
    <property type="match status" value="1"/>
</dbReference>
<dbReference type="SUPFAM" id="SSF49265">
    <property type="entry name" value="Fibronectin type III"/>
    <property type="match status" value="1"/>
</dbReference>
<dbReference type="SUPFAM" id="SSF57850">
    <property type="entry name" value="RING/U-box"/>
    <property type="match status" value="1"/>
</dbReference>
<dbReference type="PROSITE" id="PS51262">
    <property type="entry name" value="COS"/>
    <property type="match status" value="1"/>
</dbReference>
<dbReference type="PROSITE" id="PS50853">
    <property type="entry name" value="FN3"/>
    <property type="match status" value="1"/>
</dbReference>
<dbReference type="PROSITE" id="PS50119">
    <property type="entry name" value="ZF_BBOX"/>
    <property type="match status" value="1"/>
</dbReference>
<dbReference type="PROSITE" id="PS00518">
    <property type="entry name" value="ZF_RING_1"/>
    <property type="match status" value="1"/>
</dbReference>
<dbReference type="PROSITE" id="PS50089">
    <property type="entry name" value="ZF_RING_2"/>
    <property type="match status" value="1"/>
</dbReference>
<gene>
    <name type="primary">Trim42</name>
</gene>
<sequence>METAMCVCSPCCTWQRCCPRLFSCLCCKFIFTSERNCTCFPCPYKDERNCQFCHCTCAENPNCHWCCCSWANDPNCKCCCTASTNLKCYYYESHCCRNVTITFRKGRLRSIVTSSKTALRVGSSDTQMDEPKTMPASSHLVSHLTCPMCNRLRLHSFMLPCNHSLCEKCLRQLQKHAEVTENFFILICPMCSRSHCMPYSHQMHLPENYLRGRLTKRYMQQHGYLKWRFDRSSGPILCQVCRTRRIAYKRCVTCRLNLCNDCLKAFHSDVAMQDHVFVDTSAEDQDEKICIHHPSSRINEYCRSDNQLLCAFCKIAFHNGHDTVSLIDACSERSAALFSAIAKFKAVRYEIDNDLMEFNILKSSFKADKEAKRKEVRNGFLKLRAILQEKEKIIMEQIENLEVSRQKEIEKYVYITTMKVNEMDGLIAYSKEALKETGQVAFLQSAKILVDQIEEGIQNTFRPDPQLRLHSLHCIPLDFAELSNAIHELFPTGPKKACSSGDSLPSQYPIHSEMMIARKVTFSTHSFGNQQIYQRSSSLISFNTANDKGKMGLENYGRAQSAAPAKTTDGLYTYWSATGETQPPQSSNSFHNWYSFNDTSVRTPGPIVIYQTLVYPRAAKVYWTCPTEDVDSFEMEFYELVTTPPNNVRTELCGQIRDILQQNLELHNLTPNTEYLFKVRAINDNGPGQWSDICKVVTPDGRGKNRAKWGLLKNIQSALQKRF</sequence>
<reference key="1">
    <citation type="journal article" date="2005" name="Science">
        <title>The transcriptional landscape of the mammalian genome.</title>
        <authorList>
            <person name="Carninci P."/>
            <person name="Kasukawa T."/>
            <person name="Katayama S."/>
            <person name="Gough J."/>
            <person name="Frith M.C."/>
            <person name="Maeda N."/>
            <person name="Oyama R."/>
            <person name="Ravasi T."/>
            <person name="Lenhard B."/>
            <person name="Wells C."/>
            <person name="Kodzius R."/>
            <person name="Shimokawa K."/>
            <person name="Bajic V.B."/>
            <person name="Brenner S.E."/>
            <person name="Batalov S."/>
            <person name="Forrest A.R."/>
            <person name="Zavolan M."/>
            <person name="Davis M.J."/>
            <person name="Wilming L.G."/>
            <person name="Aidinis V."/>
            <person name="Allen J.E."/>
            <person name="Ambesi-Impiombato A."/>
            <person name="Apweiler R."/>
            <person name="Aturaliya R.N."/>
            <person name="Bailey T.L."/>
            <person name="Bansal M."/>
            <person name="Baxter L."/>
            <person name="Beisel K.W."/>
            <person name="Bersano T."/>
            <person name="Bono H."/>
            <person name="Chalk A.M."/>
            <person name="Chiu K.P."/>
            <person name="Choudhary V."/>
            <person name="Christoffels A."/>
            <person name="Clutterbuck D.R."/>
            <person name="Crowe M.L."/>
            <person name="Dalla E."/>
            <person name="Dalrymple B.P."/>
            <person name="de Bono B."/>
            <person name="Della Gatta G."/>
            <person name="di Bernardo D."/>
            <person name="Down T."/>
            <person name="Engstrom P."/>
            <person name="Fagiolini M."/>
            <person name="Faulkner G."/>
            <person name="Fletcher C.F."/>
            <person name="Fukushima T."/>
            <person name="Furuno M."/>
            <person name="Futaki S."/>
            <person name="Gariboldi M."/>
            <person name="Georgii-Hemming P."/>
            <person name="Gingeras T.R."/>
            <person name="Gojobori T."/>
            <person name="Green R.E."/>
            <person name="Gustincich S."/>
            <person name="Harbers M."/>
            <person name="Hayashi Y."/>
            <person name="Hensch T.K."/>
            <person name="Hirokawa N."/>
            <person name="Hill D."/>
            <person name="Huminiecki L."/>
            <person name="Iacono M."/>
            <person name="Ikeo K."/>
            <person name="Iwama A."/>
            <person name="Ishikawa T."/>
            <person name="Jakt M."/>
            <person name="Kanapin A."/>
            <person name="Katoh M."/>
            <person name="Kawasawa Y."/>
            <person name="Kelso J."/>
            <person name="Kitamura H."/>
            <person name="Kitano H."/>
            <person name="Kollias G."/>
            <person name="Krishnan S.P."/>
            <person name="Kruger A."/>
            <person name="Kummerfeld S.K."/>
            <person name="Kurochkin I.V."/>
            <person name="Lareau L.F."/>
            <person name="Lazarevic D."/>
            <person name="Lipovich L."/>
            <person name="Liu J."/>
            <person name="Liuni S."/>
            <person name="McWilliam S."/>
            <person name="Madan Babu M."/>
            <person name="Madera M."/>
            <person name="Marchionni L."/>
            <person name="Matsuda H."/>
            <person name="Matsuzawa S."/>
            <person name="Miki H."/>
            <person name="Mignone F."/>
            <person name="Miyake S."/>
            <person name="Morris K."/>
            <person name="Mottagui-Tabar S."/>
            <person name="Mulder N."/>
            <person name="Nakano N."/>
            <person name="Nakauchi H."/>
            <person name="Ng P."/>
            <person name="Nilsson R."/>
            <person name="Nishiguchi S."/>
            <person name="Nishikawa S."/>
            <person name="Nori F."/>
            <person name="Ohara O."/>
            <person name="Okazaki Y."/>
            <person name="Orlando V."/>
            <person name="Pang K.C."/>
            <person name="Pavan W.J."/>
            <person name="Pavesi G."/>
            <person name="Pesole G."/>
            <person name="Petrovsky N."/>
            <person name="Piazza S."/>
            <person name="Reed J."/>
            <person name="Reid J.F."/>
            <person name="Ring B.Z."/>
            <person name="Ringwald M."/>
            <person name="Rost B."/>
            <person name="Ruan Y."/>
            <person name="Salzberg S.L."/>
            <person name="Sandelin A."/>
            <person name="Schneider C."/>
            <person name="Schoenbach C."/>
            <person name="Sekiguchi K."/>
            <person name="Semple C.A."/>
            <person name="Seno S."/>
            <person name="Sessa L."/>
            <person name="Sheng Y."/>
            <person name="Shibata Y."/>
            <person name="Shimada H."/>
            <person name="Shimada K."/>
            <person name="Silva D."/>
            <person name="Sinclair B."/>
            <person name="Sperling S."/>
            <person name="Stupka E."/>
            <person name="Sugiura K."/>
            <person name="Sultana R."/>
            <person name="Takenaka Y."/>
            <person name="Taki K."/>
            <person name="Tammoja K."/>
            <person name="Tan S.L."/>
            <person name="Tang S."/>
            <person name="Taylor M.S."/>
            <person name="Tegner J."/>
            <person name="Teichmann S.A."/>
            <person name="Ueda H.R."/>
            <person name="van Nimwegen E."/>
            <person name="Verardo R."/>
            <person name="Wei C.L."/>
            <person name="Yagi K."/>
            <person name="Yamanishi H."/>
            <person name="Zabarovsky E."/>
            <person name="Zhu S."/>
            <person name="Zimmer A."/>
            <person name="Hide W."/>
            <person name="Bult C."/>
            <person name="Grimmond S.M."/>
            <person name="Teasdale R.D."/>
            <person name="Liu E.T."/>
            <person name="Brusic V."/>
            <person name="Quackenbush J."/>
            <person name="Wahlestedt C."/>
            <person name="Mattick J.S."/>
            <person name="Hume D.A."/>
            <person name="Kai C."/>
            <person name="Sasaki D."/>
            <person name="Tomaru Y."/>
            <person name="Fukuda S."/>
            <person name="Kanamori-Katayama M."/>
            <person name="Suzuki M."/>
            <person name="Aoki J."/>
            <person name="Arakawa T."/>
            <person name="Iida J."/>
            <person name="Imamura K."/>
            <person name="Itoh M."/>
            <person name="Kato T."/>
            <person name="Kawaji H."/>
            <person name="Kawagashira N."/>
            <person name="Kawashima T."/>
            <person name="Kojima M."/>
            <person name="Kondo S."/>
            <person name="Konno H."/>
            <person name="Nakano K."/>
            <person name="Ninomiya N."/>
            <person name="Nishio T."/>
            <person name="Okada M."/>
            <person name="Plessy C."/>
            <person name="Shibata K."/>
            <person name="Shiraki T."/>
            <person name="Suzuki S."/>
            <person name="Tagami M."/>
            <person name="Waki K."/>
            <person name="Watahiki A."/>
            <person name="Okamura-Oho Y."/>
            <person name="Suzuki H."/>
            <person name="Kawai J."/>
            <person name="Hayashizaki Y."/>
        </authorList>
    </citation>
    <scope>NUCLEOTIDE SEQUENCE [LARGE SCALE MRNA]</scope>
    <source>
        <strain>C57BL/6J</strain>
        <tissue>Eye</tissue>
    </source>
</reference>
<reference key="2">
    <citation type="journal article" date="2009" name="PLoS Biol.">
        <title>Lineage-specific biology revealed by a finished genome assembly of the mouse.</title>
        <authorList>
            <person name="Church D.M."/>
            <person name="Goodstadt L."/>
            <person name="Hillier L.W."/>
            <person name="Zody M.C."/>
            <person name="Goldstein S."/>
            <person name="She X."/>
            <person name="Bult C.J."/>
            <person name="Agarwala R."/>
            <person name="Cherry J.L."/>
            <person name="DiCuccio M."/>
            <person name="Hlavina W."/>
            <person name="Kapustin Y."/>
            <person name="Meric P."/>
            <person name="Maglott D."/>
            <person name="Birtle Z."/>
            <person name="Marques A.C."/>
            <person name="Graves T."/>
            <person name="Zhou S."/>
            <person name="Teague B."/>
            <person name="Potamousis K."/>
            <person name="Churas C."/>
            <person name="Place M."/>
            <person name="Herschleb J."/>
            <person name="Runnheim R."/>
            <person name="Forrest D."/>
            <person name="Amos-Landgraf J."/>
            <person name="Schwartz D.C."/>
            <person name="Cheng Z."/>
            <person name="Lindblad-Toh K."/>
            <person name="Eichler E.E."/>
            <person name="Ponting C.P."/>
        </authorList>
    </citation>
    <scope>NUCLEOTIDE SEQUENCE [LARGE SCALE GENOMIC DNA]</scope>
    <source>
        <strain>C57BL/6J</strain>
    </source>
</reference>